<name>SYT_SHEPA</name>
<accession>A8H4U6</accession>
<protein>
    <recommendedName>
        <fullName evidence="1">Threonine--tRNA ligase</fullName>
        <ecNumber evidence="1">6.1.1.3</ecNumber>
    </recommendedName>
    <alternativeName>
        <fullName evidence="1">Threonyl-tRNA synthetase</fullName>
        <shortName evidence="1">ThrRS</shortName>
    </alternativeName>
</protein>
<proteinExistence type="inferred from homology"/>
<evidence type="ECO:0000255" key="1">
    <source>
        <dbReference type="HAMAP-Rule" id="MF_00184"/>
    </source>
</evidence>
<evidence type="ECO:0000255" key="2">
    <source>
        <dbReference type="PROSITE-ProRule" id="PRU01228"/>
    </source>
</evidence>
<sequence>MPVITLPDGSKREFAHSVSTLDVAADIGPGLAKACIAGRVNGELKDACDLIETDSDLSIITAKDEEGVEILRHSCAHLLGHAIKQLFPETKMAIGPVIDNGFYYDIDLDHKLTQEDIDALEKRMAELAKTNYAVDKRVVSWQEARDTFESRGEVYKMAILDENIPKDSTPALYHHEEYIDMCRGPHVPNMKFCQNFKLMSVAGAYWRGNSDNKMLQRVYGTAWADKKALKVHLNRLEEAAKRDHRKIGKQLDLYHMQEEAPGMVFWHNDGWSLFLELEKFIRQKLGQYTYQEVKGPLMMDRVLWERSGHWDKYSEAMFTTSSENREYAVKPMNCPGHVQIFNQGLKSYRDLPLRMAEFGCCHRNEPSGSLHGLMRVRGFTQDDAHIFCTEEQVQQEVSACIKMVYDTYETFGFNSIVVKLSTRPEKRIGDDEMWDRAEEALKQALKANDIEFEILPGEGAFYGPKIEFTLHDCLDRAWQCGTVQLDYALPGRLGATYVAEDNSRQTPVMIHRAILGSLERFLGILIEEYAGKFPAWLSPVQVVVMNITDKQSDYVDEVVNLFKEHGIRATKDLRNEKIGFKIREHTLRRVPYLLVVGDQEMENKEVAVRTREGVDLGKMQIEEFATKLKNQISLRSLNLLED</sequence>
<keyword id="KW-0030">Aminoacyl-tRNA synthetase</keyword>
<keyword id="KW-0067">ATP-binding</keyword>
<keyword id="KW-0963">Cytoplasm</keyword>
<keyword id="KW-0436">Ligase</keyword>
<keyword id="KW-0479">Metal-binding</keyword>
<keyword id="KW-0547">Nucleotide-binding</keyword>
<keyword id="KW-0648">Protein biosynthesis</keyword>
<keyword id="KW-1185">Reference proteome</keyword>
<keyword id="KW-0694">RNA-binding</keyword>
<keyword id="KW-0820">tRNA-binding</keyword>
<keyword id="KW-0862">Zinc</keyword>
<dbReference type="EC" id="6.1.1.3" evidence="1"/>
<dbReference type="EMBL" id="CP000851">
    <property type="protein sequence ID" value="ABV87583.1"/>
    <property type="molecule type" value="Genomic_DNA"/>
</dbReference>
<dbReference type="RefSeq" id="WP_012155499.1">
    <property type="nucleotide sequence ID" value="NC_009901.1"/>
</dbReference>
<dbReference type="SMR" id="A8H4U6"/>
<dbReference type="STRING" id="398579.Spea_2263"/>
<dbReference type="KEGG" id="spl:Spea_2263"/>
<dbReference type="eggNOG" id="COG0441">
    <property type="taxonomic scope" value="Bacteria"/>
</dbReference>
<dbReference type="HOGENOM" id="CLU_008554_0_1_6"/>
<dbReference type="OrthoDB" id="9802304at2"/>
<dbReference type="Proteomes" id="UP000002608">
    <property type="component" value="Chromosome"/>
</dbReference>
<dbReference type="GO" id="GO:0005829">
    <property type="term" value="C:cytosol"/>
    <property type="evidence" value="ECO:0007669"/>
    <property type="project" value="TreeGrafter"/>
</dbReference>
<dbReference type="GO" id="GO:0005524">
    <property type="term" value="F:ATP binding"/>
    <property type="evidence" value="ECO:0007669"/>
    <property type="project" value="UniProtKB-UniRule"/>
</dbReference>
<dbReference type="GO" id="GO:0046872">
    <property type="term" value="F:metal ion binding"/>
    <property type="evidence" value="ECO:0007669"/>
    <property type="project" value="UniProtKB-KW"/>
</dbReference>
<dbReference type="GO" id="GO:0004829">
    <property type="term" value="F:threonine-tRNA ligase activity"/>
    <property type="evidence" value="ECO:0007669"/>
    <property type="project" value="UniProtKB-UniRule"/>
</dbReference>
<dbReference type="GO" id="GO:0000049">
    <property type="term" value="F:tRNA binding"/>
    <property type="evidence" value="ECO:0007669"/>
    <property type="project" value="UniProtKB-KW"/>
</dbReference>
<dbReference type="GO" id="GO:0006435">
    <property type="term" value="P:threonyl-tRNA aminoacylation"/>
    <property type="evidence" value="ECO:0007669"/>
    <property type="project" value="UniProtKB-UniRule"/>
</dbReference>
<dbReference type="CDD" id="cd01667">
    <property type="entry name" value="TGS_ThrRS"/>
    <property type="match status" value="1"/>
</dbReference>
<dbReference type="CDD" id="cd00860">
    <property type="entry name" value="ThrRS_anticodon"/>
    <property type="match status" value="1"/>
</dbReference>
<dbReference type="CDD" id="cd00771">
    <property type="entry name" value="ThrRS_core"/>
    <property type="match status" value="1"/>
</dbReference>
<dbReference type="FunFam" id="3.10.20.30:FF:000005">
    <property type="entry name" value="Threonine--tRNA ligase"/>
    <property type="match status" value="1"/>
</dbReference>
<dbReference type="FunFam" id="3.30.54.20:FF:000002">
    <property type="entry name" value="Threonine--tRNA ligase"/>
    <property type="match status" value="1"/>
</dbReference>
<dbReference type="FunFam" id="3.30.930.10:FF:000002">
    <property type="entry name" value="Threonine--tRNA ligase"/>
    <property type="match status" value="1"/>
</dbReference>
<dbReference type="FunFam" id="3.40.50.800:FF:000001">
    <property type="entry name" value="Threonine--tRNA ligase"/>
    <property type="match status" value="1"/>
</dbReference>
<dbReference type="FunFam" id="3.30.980.10:FF:000005">
    <property type="entry name" value="Threonyl-tRNA synthetase, mitochondrial"/>
    <property type="match status" value="1"/>
</dbReference>
<dbReference type="Gene3D" id="3.10.20.30">
    <property type="match status" value="1"/>
</dbReference>
<dbReference type="Gene3D" id="3.30.54.20">
    <property type="match status" value="1"/>
</dbReference>
<dbReference type="Gene3D" id="3.40.50.800">
    <property type="entry name" value="Anticodon-binding domain"/>
    <property type="match status" value="1"/>
</dbReference>
<dbReference type="Gene3D" id="3.30.930.10">
    <property type="entry name" value="Bira Bifunctional Protein, Domain 2"/>
    <property type="match status" value="1"/>
</dbReference>
<dbReference type="Gene3D" id="3.30.980.10">
    <property type="entry name" value="Threonyl-trna Synthetase, Chain A, domain 2"/>
    <property type="match status" value="1"/>
</dbReference>
<dbReference type="HAMAP" id="MF_00184">
    <property type="entry name" value="Thr_tRNA_synth"/>
    <property type="match status" value="1"/>
</dbReference>
<dbReference type="InterPro" id="IPR002314">
    <property type="entry name" value="aa-tRNA-synt_IIb"/>
</dbReference>
<dbReference type="InterPro" id="IPR006195">
    <property type="entry name" value="aa-tRNA-synth_II"/>
</dbReference>
<dbReference type="InterPro" id="IPR045864">
    <property type="entry name" value="aa-tRNA-synth_II/BPL/LPL"/>
</dbReference>
<dbReference type="InterPro" id="IPR004154">
    <property type="entry name" value="Anticodon-bd"/>
</dbReference>
<dbReference type="InterPro" id="IPR036621">
    <property type="entry name" value="Anticodon-bd_dom_sf"/>
</dbReference>
<dbReference type="InterPro" id="IPR012675">
    <property type="entry name" value="Beta-grasp_dom_sf"/>
</dbReference>
<dbReference type="InterPro" id="IPR004095">
    <property type="entry name" value="TGS"/>
</dbReference>
<dbReference type="InterPro" id="IPR012676">
    <property type="entry name" value="TGS-like"/>
</dbReference>
<dbReference type="InterPro" id="IPR002320">
    <property type="entry name" value="Thr-tRNA-ligase_IIa"/>
</dbReference>
<dbReference type="InterPro" id="IPR018163">
    <property type="entry name" value="Thr/Ala-tRNA-synth_IIc_edit"/>
</dbReference>
<dbReference type="InterPro" id="IPR047246">
    <property type="entry name" value="ThrRS_anticodon"/>
</dbReference>
<dbReference type="InterPro" id="IPR033728">
    <property type="entry name" value="ThrRS_core"/>
</dbReference>
<dbReference type="InterPro" id="IPR012947">
    <property type="entry name" value="tRNA_SAD"/>
</dbReference>
<dbReference type="NCBIfam" id="TIGR00418">
    <property type="entry name" value="thrS"/>
    <property type="match status" value="1"/>
</dbReference>
<dbReference type="PANTHER" id="PTHR11451:SF44">
    <property type="entry name" value="THREONINE--TRNA LIGASE, CHLOROPLASTIC_MITOCHONDRIAL 2"/>
    <property type="match status" value="1"/>
</dbReference>
<dbReference type="PANTHER" id="PTHR11451">
    <property type="entry name" value="THREONINE-TRNA LIGASE"/>
    <property type="match status" value="1"/>
</dbReference>
<dbReference type="Pfam" id="PF03129">
    <property type="entry name" value="HGTP_anticodon"/>
    <property type="match status" value="1"/>
</dbReference>
<dbReference type="Pfam" id="PF02824">
    <property type="entry name" value="TGS"/>
    <property type="match status" value="1"/>
</dbReference>
<dbReference type="Pfam" id="PF00587">
    <property type="entry name" value="tRNA-synt_2b"/>
    <property type="match status" value="1"/>
</dbReference>
<dbReference type="Pfam" id="PF07973">
    <property type="entry name" value="tRNA_SAD"/>
    <property type="match status" value="1"/>
</dbReference>
<dbReference type="PRINTS" id="PR01047">
    <property type="entry name" value="TRNASYNTHTHR"/>
</dbReference>
<dbReference type="SMART" id="SM00863">
    <property type="entry name" value="tRNA_SAD"/>
    <property type="match status" value="1"/>
</dbReference>
<dbReference type="SUPFAM" id="SSF52954">
    <property type="entry name" value="Class II aaRS ABD-related"/>
    <property type="match status" value="1"/>
</dbReference>
<dbReference type="SUPFAM" id="SSF55681">
    <property type="entry name" value="Class II aaRS and biotin synthetases"/>
    <property type="match status" value="1"/>
</dbReference>
<dbReference type="SUPFAM" id="SSF81271">
    <property type="entry name" value="TGS-like"/>
    <property type="match status" value="1"/>
</dbReference>
<dbReference type="SUPFAM" id="SSF55186">
    <property type="entry name" value="ThrRS/AlaRS common domain"/>
    <property type="match status" value="1"/>
</dbReference>
<dbReference type="PROSITE" id="PS50862">
    <property type="entry name" value="AA_TRNA_LIGASE_II"/>
    <property type="match status" value="1"/>
</dbReference>
<dbReference type="PROSITE" id="PS51880">
    <property type="entry name" value="TGS"/>
    <property type="match status" value="1"/>
</dbReference>
<organism>
    <name type="scientific">Shewanella pealeana (strain ATCC 700345 / ANG-SQ1)</name>
    <dbReference type="NCBI Taxonomy" id="398579"/>
    <lineage>
        <taxon>Bacteria</taxon>
        <taxon>Pseudomonadati</taxon>
        <taxon>Pseudomonadota</taxon>
        <taxon>Gammaproteobacteria</taxon>
        <taxon>Alteromonadales</taxon>
        <taxon>Shewanellaceae</taxon>
        <taxon>Shewanella</taxon>
    </lineage>
</organism>
<gene>
    <name evidence="1" type="primary">thrS</name>
    <name type="ordered locus">Spea_2263</name>
</gene>
<comment type="function">
    <text evidence="1">Catalyzes the attachment of threonine to tRNA(Thr) in a two-step reaction: L-threonine is first activated by ATP to form Thr-AMP and then transferred to the acceptor end of tRNA(Thr). Also edits incorrectly charged L-seryl-tRNA(Thr).</text>
</comment>
<comment type="catalytic activity">
    <reaction evidence="1">
        <text>tRNA(Thr) + L-threonine + ATP = L-threonyl-tRNA(Thr) + AMP + diphosphate + H(+)</text>
        <dbReference type="Rhea" id="RHEA:24624"/>
        <dbReference type="Rhea" id="RHEA-COMP:9670"/>
        <dbReference type="Rhea" id="RHEA-COMP:9704"/>
        <dbReference type="ChEBI" id="CHEBI:15378"/>
        <dbReference type="ChEBI" id="CHEBI:30616"/>
        <dbReference type="ChEBI" id="CHEBI:33019"/>
        <dbReference type="ChEBI" id="CHEBI:57926"/>
        <dbReference type="ChEBI" id="CHEBI:78442"/>
        <dbReference type="ChEBI" id="CHEBI:78534"/>
        <dbReference type="ChEBI" id="CHEBI:456215"/>
        <dbReference type="EC" id="6.1.1.3"/>
    </reaction>
</comment>
<comment type="cofactor">
    <cofactor evidence="1">
        <name>Zn(2+)</name>
        <dbReference type="ChEBI" id="CHEBI:29105"/>
    </cofactor>
    <text evidence="1">Binds 1 zinc ion per subunit.</text>
</comment>
<comment type="subunit">
    <text evidence="1">Homodimer.</text>
</comment>
<comment type="subcellular location">
    <subcellularLocation>
        <location evidence="1">Cytoplasm</location>
    </subcellularLocation>
</comment>
<comment type="similarity">
    <text evidence="1">Belongs to the class-II aminoacyl-tRNA synthetase family.</text>
</comment>
<feature type="chain" id="PRO_1000077374" description="Threonine--tRNA ligase">
    <location>
        <begin position="1"/>
        <end position="642"/>
    </location>
</feature>
<feature type="domain" description="TGS" evidence="2">
    <location>
        <begin position="1"/>
        <end position="61"/>
    </location>
</feature>
<feature type="region of interest" description="Catalytic" evidence="1">
    <location>
        <begin position="243"/>
        <end position="534"/>
    </location>
</feature>
<feature type="binding site" evidence="1">
    <location>
        <position position="334"/>
    </location>
    <ligand>
        <name>Zn(2+)</name>
        <dbReference type="ChEBI" id="CHEBI:29105"/>
    </ligand>
</feature>
<feature type="binding site" evidence="1">
    <location>
        <position position="385"/>
    </location>
    <ligand>
        <name>Zn(2+)</name>
        <dbReference type="ChEBI" id="CHEBI:29105"/>
    </ligand>
</feature>
<feature type="binding site" evidence="1">
    <location>
        <position position="511"/>
    </location>
    <ligand>
        <name>Zn(2+)</name>
        <dbReference type="ChEBI" id="CHEBI:29105"/>
    </ligand>
</feature>
<reference key="1">
    <citation type="submission" date="2007-10" db="EMBL/GenBank/DDBJ databases">
        <title>Complete sequence of Shewanella pealeana ATCC 700345.</title>
        <authorList>
            <consortium name="US DOE Joint Genome Institute"/>
            <person name="Copeland A."/>
            <person name="Lucas S."/>
            <person name="Lapidus A."/>
            <person name="Barry K."/>
            <person name="Glavina del Rio T."/>
            <person name="Dalin E."/>
            <person name="Tice H."/>
            <person name="Pitluck S."/>
            <person name="Chertkov O."/>
            <person name="Brettin T."/>
            <person name="Bruce D."/>
            <person name="Detter J.C."/>
            <person name="Han C."/>
            <person name="Schmutz J."/>
            <person name="Larimer F."/>
            <person name="Land M."/>
            <person name="Hauser L."/>
            <person name="Kyrpides N."/>
            <person name="Kim E."/>
            <person name="Zhao J.-S.Z."/>
            <person name="Manno D."/>
            <person name="Hawari J."/>
            <person name="Richardson P."/>
        </authorList>
    </citation>
    <scope>NUCLEOTIDE SEQUENCE [LARGE SCALE GENOMIC DNA]</scope>
    <source>
        <strain>ATCC 700345 / ANG-SQ1</strain>
    </source>
</reference>